<sequence length="170" mass="18065">MVPAQHRPPDRPGDPAHDPGRGRRLGIDVGAARIGVACSDPDAILATPVETVRRDRSGKHLRRLAALAAELEAVEVIVGLPRTLADRIGRSAQDAIELAEALARRVSPTPVRLADERLTTVSAQRSLRQAGVRASEQRAVIDQAAAVAILQSWLDERLAAMAGTQEGSDA</sequence>
<proteinExistence type="inferred from homology"/>
<evidence type="ECO:0000255" key="1">
    <source>
        <dbReference type="HAMAP-Rule" id="MF_00651"/>
    </source>
</evidence>
<evidence type="ECO:0000256" key="2">
    <source>
        <dbReference type="SAM" id="MobiDB-lite"/>
    </source>
</evidence>
<reference key="1">
    <citation type="journal article" date="2002" name="J. Bacteriol.">
        <title>Whole-genome comparison of Mycobacterium tuberculosis clinical and laboratory strains.</title>
        <authorList>
            <person name="Fleischmann R.D."/>
            <person name="Alland D."/>
            <person name="Eisen J.A."/>
            <person name="Carpenter L."/>
            <person name="White O."/>
            <person name="Peterson J.D."/>
            <person name="DeBoy R.T."/>
            <person name="Dodson R.J."/>
            <person name="Gwinn M.L."/>
            <person name="Haft D.H."/>
            <person name="Hickey E.K."/>
            <person name="Kolonay J.F."/>
            <person name="Nelson W.C."/>
            <person name="Umayam L.A."/>
            <person name="Ermolaeva M.D."/>
            <person name="Salzberg S.L."/>
            <person name="Delcher A."/>
            <person name="Utterback T.R."/>
            <person name="Weidman J.F."/>
            <person name="Khouri H.M."/>
            <person name="Gill J."/>
            <person name="Mikula A."/>
            <person name="Bishai W."/>
            <person name="Jacobs W.R. Jr."/>
            <person name="Venter J.C."/>
            <person name="Fraser C.M."/>
        </authorList>
    </citation>
    <scope>NUCLEOTIDE SEQUENCE [LARGE SCALE GENOMIC DNA]</scope>
    <source>
        <strain>CDC 1551 / Oshkosh</strain>
    </source>
</reference>
<name>YQGF_MYCTO</name>
<protein>
    <recommendedName>
        <fullName evidence="1">Putative pre-16S rRNA nuclease</fullName>
        <ecNumber evidence="1">3.1.-.-</ecNumber>
    </recommendedName>
</protein>
<accession>P9WGV6</accession>
<accession>L0T9Z0</accession>
<accession>P67487</accession>
<accession>P94999</accession>
<organism>
    <name type="scientific">Mycobacterium tuberculosis (strain CDC 1551 / Oshkosh)</name>
    <dbReference type="NCBI Taxonomy" id="83331"/>
    <lineage>
        <taxon>Bacteria</taxon>
        <taxon>Bacillati</taxon>
        <taxon>Actinomycetota</taxon>
        <taxon>Actinomycetes</taxon>
        <taxon>Mycobacteriales</taxon>
        <taxon>Mycobacteriaceae</taxon>
        <taxon>Mycobacterium</taxon>
        <taxon>Mycobacterium tuberculosis complex</taxon>
    </lineage>
</organism>
<dbReference type="EC" id="3.1.-.-" evidence="1"/>
<dbReference type="EMBL" id="AE000516">
    <property type="protein sequence ID" value="AAK46943.1"/>
    <property type="molecule type" value="Genomic_DNA"/>
</dbReference>
<dbReference type="PIR" id="F70660">
    <property type="entry name" value="F70660"/>
</dbReference>
<dbReference type="SMR" id="P9WGV6"/>
<dbReference type="KEGG" id="mtc:MT2631"/>
<dbReference type="PATRIC" id="fig|83331.31.peg.2837"/>
<dbReference type="HOGENOM" id="CLU_098240_0_1_11"/>
<dbReference type="Proteomes" id="UP000001020">
    <property type="component" value="Chromosome"/>
</dbReference>
<dbReference type="GO" id="GO:0005829">
    <property type="term" value="C:cytosol"/>
    <property type="evidence" value="ECO:0007669"/>
    <property type="project" value="TreeGrafter"/>
</dbReference>
<dbReference type="GO" id="GO:0004518">
    <property type="term" value="F:nuclease activity"/>
    <property type="evidence" value="ECO:0007669"/>
    <property type="project" value="UniProtKB-KW"/>
</dbReference>
<dbReference type="GO" id="GO:0000967">
    <property type="term" value="P:rRNA 5'-end processing"/>
    <property type="evidence" value="ECO:0007669"/>
    <property type="project" value="UniProtKB-UniRule"/>
</dbReference>
<dbReference type="CDD" id="cd16964">
    <property type="entry name" value="YqgF"/>
    <property type="match status" value="1"/>
</dbReference>
<dbReference type="FunFam" id="3.30.420.140:FF:000005">
    <property type="entry name" value="Putative pre-16S rRNA nuclease"/>
    <property type="match status" value="1"/>
</dbReference>
<dbReference type="Gene3D" id="3.30.420.140">
    <property type="entry name" value="YqgF/RNase H-like domain"/>
    <property type="match status" value="1"/>
</dbReference>
<dbReference type="HAMAP" id="MF_00651">
    <property type="entry name" value="Nuclease_YqgF"/>
    <property type="match status" value="1"/>
</dbReference>
<dbReference type="InterPro" id="IPR012337">
    <property type="entry name" value="RNaseH-like_sf"/>
</dbReference>
<dbReference type="InterPro" id="IPR005227">
    <property type="entry name" value="YqgF"/>
</dbReference>
<dbReference type="InterPro" id="IPR006641">
    <property type="entry name" value="YqgF/RNaseH-like_dom"/>
</dbReference>
<dbReference type="InterPro" id="IPR037027">
    <property type="entry name" value="YqgF/RNaseH-like_dom_sf"/>
</dbReference>
<dbReference type="NCBIfam" id="TIGR00250">
    <property type="entry name" value="RNAse_H_YqgF"/>
    <property type="match status" value="1"/>
</dbReference>
<dbReference type="PANTHER" id="PTHR33317">
    <property type="entry name" value="POLYNUCLEOTIDYL TRANSFERASE, RIBONUCLEASE H-LIKE SUPERFAMILY PROTEIN"/>
    <property type="match status" value="1"/>
</dbReference>
<dbReference type="PANTHER" id="PTHR33317:SF4">
    <property type="entry name" value="POLYNUCLEOTIDYL TRANSFERASE, RIBONUCLEASE H-LIKE SUPERFAMILY PROTEIN"/>
    <property type="match status" value="1"/>
</dbReference>
<dbReference type="Pfam" id="PF03652">
    <property type="entry name" value="RuvX"/>
    <property type="match status" value="1"/>
</dbReference>
<dbReference type="SMART" id="SM00732">
    <property type="entry name" value="YqgFc"/>
    <property type="match status" value="1"/>
</dbReference>
<dbReference type="SUPFAM" id="SSF53098">
    <property type="entry name" value="Ribonuclease H-like"/>
    <property type="match status" value="1"/>
</dbReference>
<keyword id="KW-0963">Cytoplasm</keyword>
<keyword id="KW-0378">Hydrolase</keyword>
<keyword id="KW-0540">Nuclease</keyword>
<keyword id="KW-1185">Reference proteome</keyword>
<keyword id="KW-0690">Ribosome biogenesis</keyword>
<gene>
    <name type="ordered locus">MT2631</name>
</gene>
<feature type="chain" id="PRO_0000428295" description="Putative pre-16S rRNA nuclease">
    <location>
        <begin position="1"/>
        <end position="170"/>
    </location>
</feature>
<feature type="region of interest" description="Disordered" evidence="2">
    <location>
        <begin position="1"/>
        <end position="25"/>
    </location>
</feature>
<feature type="compositionally biased region" description="Basic and acidic residues" evidence="2">
    <location>
        <begin position="7"/>
        <end position="21"/>
    </location>
</feature>
<comment type="function">
    <text evidence="1">Could be a nuclease involved in processing of the 5'-end of pre-16S rRNA.</text>
</comment>
<comment type="subcellular location">
    <subcellularLocation>
        <location evidence="1">Cytoplasm</location>
    </subcellularLocation>
</comment>
<comment type="similarity">
    <text evidence="1">Belongs to the YqgF nuclease family.</text>
</comment>